<comment type="function">
    <text evidence="1">This protein is postulated to act both as terminal energy acceptor and as a linker polypeptide that stabilizes the phycobilisome architecture. May have intrinsic bilin lyase activity (By similarity).</text>
</comment>
<comment type="subcellular location">
    <subcellularLocation>
        <location evidence="1">Plastid</location>
        <location evidence="1">Chloroplast thylakoid membrane</location>
        <topology evidence="1">Peripheral membrane protein</topology>
        <orientation evidence="1">Stromal side</orientation>
    </subcellularLocation>
</comment>
<comment type="PTM">
    <text evidence="4">Contains one covalently linked bilin chromophore. This protein autochromophorylates (Potential).</text>
</comment>
<comment type="similarity">
    <text evidence="3">Belongs to the phycobilisome linker protein family.</text>
</comment>
<organism>
    <name type="scientific">Aglaothamnion neglectum</name>
    <name type="common">Red alga</name>
    <dbReference type="NCBI Taxonomy" id="2765"/>
    <lineage>
        <taxon>Eukaryota</taxon>
        <taxon>Rhodophyta</taxon>
        <taxon>Florideophyceae</taxon>
        <taxon>Rhodymeniophycidae</taxon>
        <taxon>Ceramiales</taxon>
        <taxon>Callithamniaceae</taxon>
        <taxon>Aglaothamnion</taxon>
    </lineage>
</organism>
<feature type="chain" id="PRO_0000199259" description="Phycobiliprotein ApcE">
    <location>
        <begin position="1"/>
        <end position="885"/>
    </location>
</feature>
<feature type="domain" description="PBS-linker 1" evidence="3">
    <location>
        <begin position="242"/>
        <end position="422"/>
    </location>
</feature>
<feature type="domain" description="PBS-linker 2" evidence="3">
    <location>
        <begin position="498"/>
        <end position="680"/>
    </location>
</feature>
<feature type="domain" description="PBS-linker 3" evidence="3">
    <location>
        <begin position="694"/>
        <end position="871"/>
    </location>
</feature>
<feature type="binding site" description="covalent" evidence="2">
    <location>
        <position position="185"/>
    </location>
    <ligand>
        <name>(2R,3E)-phycocyanobilin</name>
        <dbReference type="ChEBI" id="CHEBI:85275"/>
    </ligand>
</feature>
<geneLocation type="chloroplast"/>
<accession>P28561</accession>
<name>APCE_AGLNE</name>
<dbReference type="EC" id="4.-.-.-"/>
<dbReference type="EMBL" id="Z11905">
    <property type="protein sequence ID" value="CAA77957.1"/>
    <property type="molecule type" value="Genomic_DNA"/>
</dbReference>
<dbReference type="PIR" id="S20621">
    <property type="entry name" value="S20621"/>
</dbReference>
<dbReference type="SMR" id="P28561"/>
<dbReference type="GO" id="GO:0009535">
    <property type="term" value="C:chloroplast thylakoid membrane"/>
    <property type="evidence" value="ECO:0007669"/>
    <property type="project" value="UniProtKB-SubCell"/>
</dbReference>
<dbReference type="GO" id="GO:0030089">
    <property type="term" value="C:phycobilisome"/>
    <property type="evidence" value="ECO:0007669"/>
    <property type="project" value="UniProtKB-KW"/>
</dbReference>
<dbReference type="GO" id="GO:0016829">
    <property type="term" value="F:lyase activity"/>
    <property type="evidence" value="ECO:0007669"/>
    <property type="project" value="UniProtKB-KW"/>
</dbReference>
<dbReference type="GO" id="GO:0015979">
    <property type="term" value="P:photosynthesis"/>
    <property type="evidence" value="ECO:0007669"/>
    <property type="project" value="UniProtKB-KW"/>
</dbReference>
<dbReference type="CDD" id="cd12128">
    <property type="entry name" value="PBP_PBS-LCM"/>
    <property type="match status" value="1"/>
</dbReference>
<dbReference type="Gene3D" id="1.10.3130.20">
    <property type="entry name" value="Phycobilisome linker domain"/>
    <property type="match status" value="3"/>
</dbReference>
<dbReference type="Gene3D" id="1.10.490.20">
    <property type="entry name" value="Phycocyanins"/>
    <property type="match status" value="1"/>
</dbReference>
<dbReference type="InterPro" id="IPR009050">
    <property type="entry name" value="Globin-like_sf"/>
</dbReference>
<dbReference type="InterPro" id="IPR001297">
    <property type="entry name" value="PBS_linker_dom"/>
</dbReference>
<dbReference type="InterPro" id="IPR038255">
    <property type="entry name" value="PBS_linker_sf"/>
</dbReference>
<dbReference type="InterPro" id="IPR012128">
    <property type="entry name" value="Phycobilisome_asu/bsu"/>
</dbReference>
<dbReference type="InterPro" id="IPR038719">
    <property type="entry name" value="Phycobilisome_asu/bsu_sf"/>
</dbReference>
<dbReference type="PANTHER" id="PTHR34011">
    <property type="entry name" value="PHYCOBILISOME 32.1 KDA LINKER POLYPEPTIDE, PHYCOCYANIN-ASSOCIATED, ROD 2-RELATED"/>
    <property type="match status" value="1"/>
</dbReference>
<dbReference type="Pfam" id="PF00427">
    <property type="entry name" value="PBS_linker_poly"/>
    <property type="match status" value="3"/>
</dbReference>
<dbReference type="Pfam" id="PF00502">
    <property type="entry name" value="Phycobilisome"/>
    <property type="match status" value="2"/>
</dbReference>
<dbReference type="SUPFAM" id="SSF46458">
    <property type="entry name" value="Globin-like"/>
    <property type="match status" value="1"/>
</dbReference>
<dbReference type="PROSITE" id="PS51445">
    <property type="entry name" value="PBS_LINKER"/>
    <property type="match status" value="3"/>
</dbReference>
<keyword id="KW-0042">Antenna complex</keyword>
<keyword id="KW-0089">Bile pigment</keyword>
<keyword id="KW-0150">Chloroplast</keyword>
<keyword id="KW-0157">Chromophore</keyword>
<keyword id="KW-0249">Electron transport</keyword>
<keyword id="KW-0456">Lyase</keyword>
<keyword id="KW-0472">Membrane</keyword>
<keyword id="KW-0602">Photosynthesis</keyword>
<keyword id="KW-0605">Phycobilisome</keyword>
<keyword id="KW-0934">Plastid</keyword>
<keyword id="KW-0677">Repeat</keyword>
<keyword id="KW-0793">Thylakoid</keyword>
<keyword id="KW-0813">Transport</keyword>
<evidence type="ECO:0000250" key="1"/>
<evidence type="ECO:0000255" key="2"/>
<evidence type="ECO:0000255" key="3">
    <source>
        <dbReference type="PROSITE-ProRule" id="PRU00775"/>
    </source>
</evidence>
<evidence type="ECO:0000305" key="4"/>
<sequence>MIVNASSESPRVQPQLYRTASISTIVQAEQQDRFLQLGELNDLVTFLNSGTKRLEIAEVLSKNADILVAKAADKIFVGGSAISYLERPQASFVEFDNISMTQKEMSGNVQVNLLSNTSSNVISNDTLPPGFKPINVVRYGSTRMKKSLRDLDWFLRYLTYAIIAGDPNILSVNIRGLKDLISNACSSAAATVALREMRKSAISIFDNDLSAQEIVQQYFNILITEFDSPSLTDKIRRRTSTDVQGLRLPQIYSKSGIPLQRFVMKTSLSNEEKSSVLKACYRQVFERDIAKAYNLSFVDLESQVKNGSLSIKEFIRRIGKSSVYRKQFYEPFVNSRVVELAFKHFLGRGLSSLEEFQKYFSILSLRGLNGLIDALINSLEYADYFAEETCPYLRGLSEEPLESRNWGVQFSLLNYSAPFRKVPQFITLFSDYKMSLPDQHPYGLGNDHLALQFGAIFPNSLTALSNKSAFFGRYTRRILLRQGPGIYSQISNPQARSKSIGSLGPKIFKLNSIDNTYFSDEVMSLPPDIEQIIKAIYLRVFGRFIYLEELSSVRKFESLFRSSKISVRDFIRNLVKSSVFRSLYWEPLYICKAIEYIHYRLLGRPSYGRQEINQYFDIVYREGYYKMIDYLLNSSEYIRSFGDNTVPYERYITSANMILKSNYSNFLYSTLKTKNSNSKKFIELSNILEKRSLNSIQARISQGVSTVRDQYKVFQLTQLSSQVDKRQVVKAIYRQIFERDLNSFAIGDEFINLEKALVNNNITVQQFIEQIGSSSLYGREFYQPYPNTKVIELGTKHFLGRAPNNQAEIRYYNQILASQGLSSFITVLVNSNEYNQVFGVNIVPYRRFTTLPAANFPNTEKLYNTLTKQSSEIIVPSFIVVPGNQ</sequence>
<protein>
    <recommendedName>
        <fullName>Phycobiliprotein ApcE</fullName>
        <ecNumber>4.-.-.-</ecNumber>
    </recommendedName>
    <alternativeName>
        <fullName>Anchor polypeptide</fullName>
    </alternativeName>
    <alternativeName>
        <fullName>PBS-anchor protein</fullName>
    </alternativeName>
    <alternativeName>
        <fullName>Phycobilisome linker polypeptide</fullName>
    </alternativeName>
</protein>
<reference key="1">
    <citation type="journal article" date="1993" name="Plant Mol. Biol.">
        <title>Characterization and transcript analysis of the major phycobiliprotein subunit genes from Aglaothamnion neglectum (Rhodophyta).</title>
        <authorList>
            <person name="Apt K.E."/>
            <person name="Grossman A.R."/>
        </authorList>
    </citation>
    <scope>NUCLEOTIDE SEQUENCE [GENOMIC DNA]</scope>
</reference>
<gene>
    <name type="primary">apcE</name>
</gene>
<proteinExistence type="inferred from homology"/>